<dbReference type="EMBL" id="X17628">
    <property type="protein sequence ID" value="CAA35624.1"/>
    <property type="molecule type" value="Genomic_DNA"/>
</dbReference>
<dbReference type="EMBL" id="AL391753">
    <property type="protein sequence ID" value="CAC05800.1"/>
    <property type="molecule type" value="Genomic_DNA"/>
</dbReference>
<dbReference type="EMBL" id="AF348706">
    <property type="protein sequence ID" value="AAK18443.1"/>
    <property type="molecule type" value="Genomic_DNA"/>
</dbReference>
<dbReference type="EMBL" id="AF386526">
    <property type="protein sequence ID" value="AAL72353.1"/>
    <property type="molecule type" value="Genomic_DNA"/>
</dbReference>
<dbReference type="EMBL" id="J04117">
    <property type="protein sequence ID" value="AAA26525.1"/>
    <property type="molecule type" value="Genomic_DNA"/>
</dbReference>
<dbReference type="PIR" id="S12763">
    <property type="entry name" value="E31265"/>
</dbReference>
<dbReference type="RefSeq" id="NP_085287.1">
    <property type="nucleotide sequence ID" value="NC_002698.1"/>
</dbReference>
<dbReference type="RefSeq" id="NP_858258.1">
    <property type="nucleotide sequence ID" value="NC_004851.1"/>
</dbReference>
<dbReference type="RefSeq" id="WP_005063225.1">
    <property type="nucleotide sequence ID" value="NZ_UIPM01000036.1"/>
</dbReference>
<dbReference type="RefSeq" id="YP_009062482.1">
    <property type="nucleotide sequence ID" value="NC_024996.1"/>
</dbReference>
<dbReference type="PDB" id="2GDC">
    <property type="method" value="X-ray"/>
    <property type="resolution" value="2.74 A"/>
    <property type="chains" value="B=623-630"/>
</dbReference>
<dbReference type="PDB" id="2GWW">
    <property type="method" value="X-ray"/>
    <property type="resolution" value="2.72 A"/>
    <property type="chains" value="B=602-631"/>
</dbReference>
<dbReference type="PDB" id="2HSQ">
    <property type="method" value="X-ray"/>
    <property type="resolution" value="3.97 A"/>
    <property type="chains" value="B=565-587"/>
</dbReference>
<dbReference type="PDB" id="2IBF">
    <property type="method" value="X-ray"/>
    <property type="resolution" value="3.20 A"/>
    <property type="chains" value="B/D=563-587"/>
</dbReference>
<dbReference type="PDB" id="3RF3">
    <property type="method" value="X-ray"/>
    <property type="resolution" value="1.61 A"/>
    <property type="chains" value="C/D=488-512"/>
</dbReference>
<dbReference type="PDB" id="5NL1">
    <property type="method" value="X-ray"/>
    <property type="resolution" value="2.50 A"/>
    <property type="chains" value="G/H/I/J/K/L=488-512"/>
</dbReference>
<dbReference type="PDBsum" id="2GDC"/>
<dbReference type="PDBsum" id="2GWW"/>
<dbReference type="PDBsum" id="2HSQ"/>
<dbReference type="PDBsum" id="2IBF"/>
<dbReference type="PDBsum" id="3RF3"/>
<dbReference type="PDBsum" id="5NL1"/>
<dbReference type="SMR" id="P18010"/>
<dbReference type="IntAct" id="P18010">
    <property type="interactions" value="1"/>
</dbReference>
<dbReference type="MINT" id="P18010"/>
<dbReference type="PaxDb" id="198214-CP0125"/>
<dbReference type="GeneID" id="1238056"/>
<dbReference type="KEGG" id="sfl:CP0125"/>
<dbReference type="PATRIC" id="fig|198214.7.peg.5380"/>
<dbReference type="HOGENOM" id="CLU_432046_0_0_6"/>
<dbReference type="EvolutionaryTrace" id="P18010"/>
<dbReference type="Proteomes" id="UP000001006">
    <property type="component" value="Plasmid pCP301"/>
</dbReference>
<dbReference type="GO" id="GO:0005576">
    <property type="term" value="C:extracellular region"/>
    <property type="evidence" value="ECO:0007669"/>
    <property type="project" value="UniProtKB-SubCell"/>
</dbReference>
<dbReference type="GO" id="GO:0003779">
    <property type="term" value="F:actin binding"/>
    <property type="evidence" value="ECO:0007669"/>
    <property type="project" value="UniProtKB-KW"/>
</dbReference>
<dbReference type="GO" id="GO:0017166">
    <property type="term" value="F:vinculin binding"/>
    <property type="evidence" value="ECO:0000353"/>
    <property type="project" value="UniProtKB"/>
</dbReference>
<dbReference type="GO" id="GO:0030836">
    <property type="term" value="P:positive regulation of actin filament depolymerization"/>
    <property type="evidence" value="ECO:0000314"/>
    <property type="project" value="UniProtKB"/>
</dbReference>
<dbReference type="Gene3D" id="1.10.4150.10">
    <property type="entry name" value="SipA N-terminal domain-like"/>
    <property type="match status" value="1"/>
</dbReference>
<dbReference type="InterPro" id="IPR023225">
    <property type="entry name" value="SipA_chaperone-bd"/>
</dbReference>
<dbReference type="InterPro" id="IPR015138">
    <property type="entry name" value="SipA_N"/>
</dbReference>
<dbReference type="InterPro" id="IPR040658">
    <property type="entry name" value="SipA_VBS"/>
</dbReference>
<dbReference type="Pfam" id="PF09052">
    <property type="entry name" value="SipA"/>
    <property type="match status" value="1"/>
</dbReference>
<dbReference type="Pfam" id="PF17985">
    <property type="entry name" value="SipA_VBS"/>
    <property type="match status" value="3"/>
</dbReference>
<dbReference type="SUPFAM" id="SSF140746">
    <property type="entry name" value="SipA N-terminal domain-like"/>
    <property type="match status" value="1"/>
</dbReference>
<name>IPAA_SHIFL</name>
<proteinExistence type="evidence at protein level"/>
<comment type="function">
    <text evidence="2 3">Rapidly associates with the first 265 amino acids of vinculin after bacteria-cell contact. This interaction is critical for efficient Shigella uptake. IpaA acts as a potent activator of vinculin and increase its ability to interact with F-actin. The complex IpaA-vinculin induces F-actin depolymerization along with the occasional formation of actin filament bundles.</text>
</comment>
<comment type="subunit">
    <text>The association of the vinculin-IpaA complex with actin occurs via the F-actin binding domain located on the tail of vinculin.</text>
</comment>
<comment type="interaction">
    <interactant intactId="EBI-7640410">
        <id>P18010</id>
    </interactant>
    <interactant intactId="EBI-716775">
        <id>P18206</id>
        <label>VCL</label>
    </interactant>
    <organismsDiffer>true</organismsDiffer>
    <experiments>7</experiments>
</comment>
<comment type="subcellular location">
    <subcellularLocation>
        <location>Secreted</location>
    </subcellularLocation>
    <text>Secreted through the specialized type-III secretion system Mxi/Spa from the bacterium through the cell cytosol.</text>
</comment>
<comment type="induction">
    <text>Synthesis of this immunogen is repressed at 30 degrees Celsius and restored at 37 degrees Celsius.</text>
</comment>
<comment type="disruption phenotype">
    <text evidence="3">Cells are still able to induce low levels of internalization, but are impaired in their ability to enter epithelial cells.</text>
</comment>
<comment type="similarity">
    <text evidence="4">Belongs to the SipA/IpaA family.</text>
</comment>
<accession>P18010</accession>
<accession>Q8VSH8</accession>
<geneLocation type="plasmid">
    <name>pWR100</name>
</geneLocation>
<geneLocation type="plasmid">
    <name>pWR501</name>
</geneLocation>
<geneLocation type="plasmid">
    <name>pCP301</name>
</geneLocation>
<reference key="1">
    <citation type="journal article" date="1990" name="Nucleic Acids Res.">
        <title>Nucleotide sequence of invasion plasmid antigen gene ipaA from Shigella flexneri 5.</title>
        <authorList>
            <person name="Venkatesan M.M."/>
            <person name="Buysse J.M."/>
        </authorList>
    </citation>
    <scope>NUCLEOTIDE SEQUENCE [GENOMIC DNA]</scope>
    <source>
        <strain>M90T / Serotype 5a</strain>
        <plasmid>pWR100</plasmid>
    </source>
</reference>
<reference key="2">
    <citation type="journal article" date="2000" name="Mol. Microbiol.">
        <title>The virulence plasmid pWR100 and the repertoire of proteins secreted by the type III secretion apparatus of Shigella flexneri.</title>
        <authorList>
            <person name="Buchrieser C."/>
            <person name="Glaser P."/>
            <person name="Rusniok C."/>
            <person name="Nedjari H."/>
            <person name="d'Hauteville H."/>
            <person name="Kunst F."/>
            <person name="Sansonetti P.J."/>
            <person name="Parsot C."/>
        </authorList>
    </citation>
    <scope>NUCLEOTIDE SEQUENCE [GENOMIC DNA]</scope>
    <source>
        <strain>M90T / Serotype 5a</strain>
        <plasmid>pWR100</plasmid>
    </source>
</reference>
<reference key="3">
    <citation type="journal article" date="2001" name="Infect. Immun.">
        <title>Complete DNA sequence and analysis of the large virulence plasmid of Shigella flexneri.</title>
        <authorList>
            <person name="Venkatesan M.M."/>
            <person name="Goldberg M.B."/>
            <person name="Rose D.J."/>
            <person name="Grotbeck E.J."/>
            <person name="Burland V."/>
            <person name="Blattner F.R."/>
        </authorList>
    </citation>
    <scope>NUCLEOTIDE SEQUENCE [GENOMIC DNA]</scope>
    <source>
        <strain>M90T / Serotype 5a</strain>
        <plasmid>pWR501</plasmid>
    </source>
</reference>
<reference key="4">
    <citation type="journal article" date="2002" name="Nucleic Acids Res.">
        <title>Genome sequence of Shigella flexneri 2a: insights into pathogenicity through comparison with genomes of Escherichia coli K12 and O157.</title>
        <authorList>
            <person name="Jin Q."/>
            <person name="Yuan Z."/>
            <person name="Xu J."/>
            <person name="Wang Y."/>
            <person name="Shen Y."/>
            <person name="Lu W."/>
            <person name="Wang J."/>
            <person name="Liu H."/>
            <person name="Yang J."/>
            <person name="Yang F."/>
            <person name="Zhang X."/>
            <person name="Zhang J."/>
            <person name="Yang G."/>
            <person name="Wu H."/>
            <person name="Qu D."/>
            <person name="Dong J."/>
            <person name="Sun L."/>
            <person name="Xue Y."/>
            <person name="Zhao A."/>
            <person name="Gao Y."/>
            <person name="Zhu J."/>
            <person name="Kan B."/>
            <person name="Ding K."/>
            <person name="Chen S."/>
            <person name="Cheng H."/>
            <person name="Yao Z."/>
            <person name="He B."/>
            <person name="Chen R."/>
            <person name="Ma D."/>
            <person name="Qiang B."/>
            <person name="Wen Y."/>
            <person name="Hou Y."/>
            <person name="Yu J."/>
        </authorList>
    </citation>
    <scope>NUCLEOTIDE SEQUENCE [LARGE SCALE GENOMIC DNA]</scope>
    <source>
        <strain>301 / Serotype 2a</strain>
        <plasmid>pCP301</plasmid>
    </source>
</reference>
<reference key="5">
    <citation type="journal article" date="1988" name="Proc. Natl. Acad. Sci. U.S.A.">
        <title>Characterization of invasion plasmid antigen genes (ipaBCD) from Shigella flexneri.</title>
        <authorList>
            <person name="Venkatesan M.M."/>
            <person name="Buysse J.M."/>
            <person name="Kopecko D.J."/>
        </authorList>
    </citation>
    <scope>NUCLEOTIDE SEQUENCE [GENOMIC DNA] OF 1-88</scope>
    <source>
        <strain>M90T / Serotype 5a</strain>
        <plasmid>pWR100</plasmid>
    </source>
</reference>
<reference key="6">
    <citation type="journal article" date="1997" name="EMBO J.">
        <title>Modulation of bacterial entry into epithelial cells by association between vinculin and the Shigella IpaA invasin.</title>
        <authorList>
            <person name="Tran Van Nhieu G."/>
            <person name="Ben-Ze'ev A."/>
            <person name="Sansonetti P.J."/>
        </authorList>
    </citation>
    <scope>FUNCTION</scope>
    <scope>DISRUPTION PHENOTYPE</scope>
</reference>
<reference key="7">
    <citation type="journal article" date="1999" name="EMBO J.">
        <title>Binding of the Shigella protein IpaA to vinculin induces F-actin depolymerization.</title>
        <authorList>
            <person name="Bourdet-Sicard R."/>
            <person name="Ruediger M."/>
            <person name="Jockusch B.M."/>
            <person name="Gounon P."/>
            <person name="Sansonetti P.J."/>
            <person name="Tran Van Nhieu G."/>
        </authorList>
    </citation>
    <scope>FUNCTION</scope>
</reference>
<feature type="chain" id="PRO_0000221448" description="Invasin IpaA">
    <location>
        <begin position="1"/>
        <end position="633"/>
    </location>
</feature>
<feature type="region of interest" description="Disordered" evidence="1">
    <location>
        <begin position="267"/>
        <end position="294"/>
    </location>
</feature>
<feature type="region of interest" description="Disordered" evidence="1">
    <location>
        <begin position="321"/>
        <end position="348"/>
    </location>
</feature>
<feature type="region of interest" description="Disordered" evidence="1">
    <location>
        <begin position="388"/>
        <end position="455"/>
    </location>
</feature>
<feature type="compositionally biased region" description="Polar residues" evidence="1">
    <location>
        <begin position="330"/>
        <end position="348"/>
    </location>
</feature>
<feature type="compositionally biased region" description="Polar residues" evidence="1">
    <location>
        <begin position="400"/>
        <end position="415"/>
    </location>
</feature>
<feature type="compositionally biased region" description="Low complexity" evidence="1">
    <location>
        <begin position="438"/>
        <end position="455"/>
    </location>
</feature>
<feature type="sequence variant" description="In plasmid pCP301.">
    <original>V</original>
    <variation>A</variation>
    <location>
        <position position="385"/>
    </location>
</feature>
<feature type="helix" evidence="7">
    <location>
        <begin position="492"/>
        <end position="507"/>
    </location>
</feature>
<feature type="helix" evidence="6">
    <location>
        <begin position="566"/>
        <end position="582"/>
    </location>
</feature>
<feature type="helix" evidence="5">
    <location>
        <begin position="611"/>
        <end position="627"/>
    </location>
</feature>
<feature type="helix" evidence="5">
    <location>
        <begin position="628"/>
        <end position="630"/>
    </location>
</feature>
<keyword id="KW-0002">3D-structure</keyword>
<keyword id="KW-0009">Actin-binding</keyword>
<keyword id="KW-0614">Plasmid</keyword>
<keyword id="KW-1185">Reference proteome</keyword>
<keyword id="KW-0964">Secreted</keyword>
<keyword id="KW-0843">Virulence</keyword>
<organism>
    <name type="scientific">Shigella flexneri</name>
    <dbReference type="NCBI Taxonomy" id="623"/>
    <lineage>
        <taxon>Bacteria</taxon>
        <taxon>Pseudomonadati</taxon>
        <taxon>Pseudomonadota</taxon>
        <taxon>Gammaproteobacteria</taxon>
        <taxon>Enterobacterales</taxon>
        <taxon>Enterobacteriaceae</taxon>
        <taxon>Shigella</taxon>
    </lineage>
</organism>
<gene>
    <name type="primary">ipaA</name>
    <name type="ordered locus">CP0125</name>
</gene>
<sequence>MHNVNNTQAPTFLYKATSPSSTEYSELKSKISDIHSSQTSLKTPASVSEKENFATSFNQKCLDFLFSSSGKEDVLRSIYSNSMNAYAKSEILEFSNVLYSLVHQNGLNFENEKGLQKIVAQYSELIIKDKLSQDSAFGPWSAKNKKLHQLRQNIEHRLALLAQQHTSGEALSLGQKLLNTEVSSFIKNNILAELKLSNETVSSLKLDDLVDAQAKLAFDSLRNQRKNTIDSKGFGIGKLSRDLNTVAVFPELLRKVLNDILEDIKDSHPIQDGLPTPPEDMPDGGPTPGANEKTSQPVIHYHINNDNRTYDNRVFDNRVYDNSYHENPENDAQSPTSQTNDLLSRNGNSLLNPQRALVQKVTSVLPHSISDTVQTFANNSALEKVFNHTPDNSDGIGSDLLTTSSQERSANNSLSRGHRPLNIQNSSTTPPLHPEGVTSSNDNSSDTTKSSASLSHRVASQINKFNSNTDSKVLQTDFLSRNGDTYLTRETIFEASKKVTNSLSNLISLIGTKSGTQERELQEKSKDITKSTTEHRINNKLKVTDANIRNYVTETNADTIDKNHAIYEKAKEVSSALSKVLSKIDDTSAELLTDDISDLKNNNDITAENNNIYKAAKDVTTSLSKVLKNINKD</sequence>
<protein>
    <recommendedName>
        <fullName>Invasin IpaA</fullName>
    </recommendedName>
    <alternativeName>
        <fullName>70 kDa antigen</fullName>
    </alternativeName>
</protein>
<evidence type="ECO:0000256" key="1">
    <source>
        <dbReference type="SAM" id="MobiDB-lite"/>
    </source>
</evidence>
<evidence type="ECO:0000269" key="2">
    <source>
    </source>
</evidence>
<evidence type="ECO:0000269" key="3">
    <source>
    </source>
</evidence>
<evidence type="ECO:0000305" key="4"/>
<evidence type="ECO:0007829" key="5">
    <source>
        <dbReference type="PDB" id="2GWW"/>
    </source>
</evidence>
<evidence type="ECO:0007829" key="6">
    <source>
        <dbReference type="PDB" id="2IBF"/>
    </source>
</evidence>
<evidence type="ECO:0007829" key="7">
    <source>
        <dbReference type="PDB" id="3RF3"/>
    </source>
</evidence>